<gene>
    <name type="ORF">DDB_G0285345</name>
</gene>
<reference key="1">
    <citation type="journal article" date="2005" name="Nature">
        <title>The genome of the social amoeba Dictyostelium discoideum.</title>
        <authorList>
            <person name="Eichinger L."/>
            <person name="Pachebat J.A."/>
            <person name="Gloeckner G."/>
            <person name="Rajandream M.A."/>
            <person name="Sucgang R."/>
            <person name="Berriman M."/>
            <person name="Song J."/>
            <person name="Olsen R."/>
            <person name="Szafranski K."/>
            <person name="Xu Q."/>
            <person name="Tunggal B."/>
            <person name="Kummerfeld S."/>
            <person name="Madera M."/>
            <person name="Konfortov B.A."/>
            <person name="Rivero F."/>
            <person name="Bankier A.T."/>
            <person name="Lehmann R."/>
            <person name="Hamlin N."/>
            <person name="Davies R."/>
            <person name="Gaudet P."/>
            <person name="Fey P."/>
            <person name="Pilcher K."/>
            <person name="Chen G."/>
            <person name="Saunders D."/>
            <person name="Sodergren E.J."/>
            <person name="Davis P."/>
            <person name="Kerhornou A."/>
            <person name="Nie X."/>
            <person name="Hall N."/>
            <person name="Anjard C."/>
            <person name="Hemphill L."/>
            <person name="Bason N."/>
            <person name="Farbrother P."/>
            <person name="Desany B."/>
            <person name="Just E."/>
            <person name="Morio T."/>
            <person name="Rost R."/>
            <person name="Churcher C.M."/>
            <person name="Cooper J."/>
            <person name="Haydock S."/>
            <person name="van Driessche N."/>
            <person name="Cronin A."/>
            <person name="Goodhead I."/>
            <person name="Muzny D.M."/>
            <person name="Mourier T."/>
            <person name="Pain A."/>
            <person name="Lu M."/>
            <person name="Harper D."/>
            <person name="Lindsay R."/>
            <person name="Hauser H."/>
            <person name="James K.D."/>
            <person name="Quiles M."/>
            <person name="Madan Babu M."/>
            <person name="Saito T."/>
            <person name="Buchrieser C."/>
            <person name="Wardroper A."/>
            <person name="Felder M."/>
            <person name="Thangavelu M."/>
            <person name="Johnson D."/>
            <person name="Knights A."/>
            <person name="Loulseged H."/>
            <person name="Mungall K.L."/>
            <person name="Oliver K."/>
            <person name="Price C."/>
            <person name="Quail M.A."/>
            <person name="Urushihara H."/>
            <person name="Hernandez J."/>
            <person name="Rabbinowitsch E."/>
            <person name="Steffen D."/>
            <person name="Sanders M."/>
            <person name="Ma J."/>
            <person name="Kohara Y."/>
            <person name="Sharp S."/>
            <person name="Simmonds M.N."/>
            <person name="Spiegler S."/>
            <person name="Tivey A."/>
            <person name="Sugano S."/>
            <person name="White B."/>
            <person name="Walker D."/>
            <person name="Woodward J.R."/>
            <person name="Winckler T."/>
            <person name="Tanaka Y."/>
            <person name="Shaulsky G."/>
            <person name="Schleicher M."/>
            <person name="Weinstock G.M."/>
            <person name="Rosenthal A."/>
            <person name="Cox E.C."/>
            <person name="Chisholm R.L."/>
            <person name="Gibbs R.A."/>
            <person name="Loomis W.F."/>
            <person name="Platzer M."/>
            <person name="Kay R.R."/>
            <person name="Williams J.G."/>
            <person name="Dear P.H."/>
            <person name="Noegel A.A."/>
            <person name="Barrell B.G."/>
            <person name="Kuspa A."/>
        </authorList>
    </citation>
    <scope>NUCLEOTIDE SEQUENCE [LARGE SCALE GENOMIC DNA]</scope>
    <source>
        <strain>AX4</strain>
    </source>
</reference>
<reference key="2">
    <citation type="journal article" date="2004" name="Eukaryot. Cell">
        <title>CbfA, the C-module DNA-binding factor, plays an essential role in the initiation of Dictyostelium discoideum development.</title>
        <authorList>
            <person name="Winckler T."/>
            <person name="Iranfar N."/>
            <person name="Beck P."/>
            <person name="Jennes I."/>
            <person name="Siol O."/>
            <person name="Baik U."/>
            <person name="Loomis W.F."/>
            <person name="Dingermann T."/>
        </authorList>
    </citation>
    <scope>INDUCTION</scope>
</reference>
<sequence length="75" mass="8473">MARIDYATAPLFVIVGLAVVLTGATGYKRLSSDQDISLTRKGQMLWKDNPTHKFVDRNTTMGYFKTIETGKYLKE</sequence>
<proteinExistence type="evidence at transcript level"/>
<accession>Q54ND0</accession>
<keyword id="KW-0472">Membrane</keyword>
<keyword id="KW-1185">Reference proteome</keyword>
<keyword id="KW-0812">Transmembrane</keyword>
<keyword id="KW-1133">Transmembrane helix</keyword>
<organism>
    <name type="scientific">Dictyostelium discoideum</name>
    <name type="common">Social amoeba</name>
    <dbReference type="NCBI Taxonomy" id="44689"/>
    <lineage>
        <taxon>Eukaryota</taxon>
        <taxon>Amoebozoa</taxon>
        <taxon>Evosea</taxon>
        <taxon>Eumycetozoa</taxon>
        <taxon>Dictyostelia</taxon>
        <taxon>Dictyosteliales</taxon>
        <taxon>Dictyosteliaceae</taxon>
        <taxon>Dictyostelium</taxon>
    </lineage>
</organism>
<name>Y5202_DICDI</name>
<feature type="chain" id="PRO_0000350776" description="Uncharacterized transmembrane protein SSD449">
    <location>
        <begin position="1"/>
        <end position="75"/>
    </location>
</feature>
<feature type="transmembrane region" description="Helical" evidence="1">
    <location>
        <begin position="7"/>
        <end position="26"/>
    </location>
</feature>
<protein>
    <recommendedName>
        <fullName>Uncharacterized transmembrane protein SSD449</fullName>
    </recommendedName>
</protein>
<comment type="subcellular location">
    <subcellularLocation>
        <location evidence="3">Membrane</location>
        <topology evidence="3">Single-pass membrane protein</topology>
    </subcellularLocation>
</comment>
<comment type="induction">
    <text evidence="2">By removal of nutrients, in a cAMP-independent manner.</text>
</comment>
<dbReference type="EMBL" id="AAFI02000079">
    <property type="protein sequence ID" value="EAL64747.1"/>
    <property type="molecule type" value="Genomic_DNA"/>
</dbReference>
<dbReference type="RefSeq" id="XP_638250.1">
    <property type="nucleotide sequence ID" value="XM_633158.1"/>
</dbReference>
<dbReference type="FunCoup" id="Q54ND0">
    <property type="interactions" value="362"/>
</dbReference>
<dbReference type="PaxDb" id="44689-DDB0235202"/>
<dbReference type="EnsemblProtists" id="EAL64747">
    <property type="protein sequence ID" value="EAL64747"/>
    <property type="gene ID" value="DDB_G0285345"/>
</dbReference>
<dbReference type="GeneID" id="8625058"/>
<dbReference type="KEGG" id="ddi:DDB_G0285345"/>
<dbReference type="dictyBase" id="DDB_G0285345"/>
<dbReference type="VEuPathDB" id="AmoebaDB:DDB_G0285345"/>
<dbReference type="eggNOG" id="ENOG502RIH7">
    <property type="taxonomic scope" value="Eukaryota"/>
</dbReference>
<dbReference type="HOGENOM" id="CLU_2676253_0_0_1"/>
<dbReference type="InParanoid" id="Q54ND0"/>
<dbReference type="OMA" id="TTHNDIS"/>
<dbReference type="PRO" id="PR:Q54ND0"/>
<dbReference type="Proteomes" id="UP000002195">
    <property type="component" value="Chromosome 4"/>
</dbReference>
<dbReference type="GO" id="GO:0016020">
    <property type="term" value="C:membrane"/>
    <property type="evidence" value="ECO:0007669"/>
    <property type="project" value="UniProtKB-SubCell"/>
</dbReference>
<dbReference type="InterPro" id="IPR010530">
    <property type="entry name" value="B12D"/>
</dbReference>
<dbReference type="Pfam" id="PF06522">
    <property type="entry name" value="B12D"/>
    <property type="match status" value="1"/>
</dbReference>
<evidence type="ECO:0000255" key="1"/>
<evidence type="ECO:0000269" key="2">
    <source>
    </source>
</evidence>
<evidence type="ECO:0000305" key="3"/>